<proteinExistence type="inferred from homology"/>
<name>RK11_PYRYE</name>
<organism>
    <name type="scientific">Pyropia yezoensis</name>
    <name type="common">Susabi-nori</name>
    <name type="synonym">Porphyra yezoensis</name>
    <dbReference type="NCBI Taxonomy" id="2788"/>
    <lineage>
        <taxon>Eukaryota</taxon>
        <taxon>Rhodophyta</taxon>
        <taxon>Bangiophyceae</taxon>
        <taxon>Bangiales</taxon>
        <taxon>Bangiaceae</taxon>
        <taxon>Pyropia</taxon>
    </lineage>
</organism>
<accession>Q1XDF0</accession>
<feature type="chain" id="PRO_0000276324" description="Large ribosomal subunit protein uL11c">
    <location>
        <begin position="1"/>
        <end position="141"/>
    </location>
</feature>
<protein>
    <recommendedName>
        <fullName evidence="1">Large ribosomal subunit protein uL11c</fullName>
    </recommendedName>
    <alternativeName>
        <fullName evidence="2">50S ribosomal protein L11, chloroplastic</fullName>
    </alternativeName>
</protein>
<reference key="1">
    <citation type="submission" date="2003-11" db="EMBL/GenBank/DDBJ databases">
        <title>Whole genome sequence of Porphyra yezoensis chloroplast.</title>
        <authorList>
            <person name="Kunimoto M."/>
            <person name="Morishima K."/>
            <person name="Yoshikawa M."/>
            <person name="Fukuda S."/>
            <person name="Kobayashi T."/>
            <person name="Kobayashi M."/>
            <person name="Okazaki T."/>
            <person name="Ohara I."/>
            <person name="Nakayama I."/>
        </authorList>
    </citation>
    <scope>NUCLEOTIDE SEQUENCE [LARGE SCALE GENOMIC DNA]</scope>
    <source>
        <strain>U-51</strain>
    </source>
</reference>
<evidence type="ECO:0000255" key="1">
    <source>
        <dbReference type="HAMAP-Rule" id="MF_00736"/>
    </source>
</evidence>
<evidence type="ECO:0000305" key="2"/>
<dbReference type="EMBL" id="AP006715">
    <property type="protein sequence ID" value="BAE92461.1"/>
    <property type="molecule type" value="Genomic_DNA"/>
</dbReference>
<dbReference type="RefSeq" id="YP_537018.1">
    <property type="nucleotide sequence ID" value="NC_007932.1"/>
</dbReference>
<dbReference type="SMR" id="Q1XDF0"/>
<dbReference type="GeneID" id="3978797"/>
<dbReference type="GO" id="GO:0009507">
    <property type="term" value="C:chloroplast"/>
    <property type="evidence" value="ECO:0007669"/>
    <property type="project" value="UniProtKB-SubCell"/>
</dbReference>
<dbReference type="GO" id="GO:0022625">
    <property type="term" value="C:cytosolic large ribosomal subunit"/>
    <property type="evidence" value="ECO:0007669"/>
    <property type="project" value="TreeGrafter"/>
</dbReference>
<dbReference type="GO" id="GO:0070180">
    <property type="term" value="F:large ribosomal subunit rRNA binding"/>
    <property type="evidence" value="ECO:0007669"/>
    <property type="project" value="UniProtKB-UniRule"/>
</dbReference>
<dbReference type="GO" id="GO:0003735">
    <property type="term" value="F:structural constituent of ribosome"/>
    <property type="evidence" value="ECO:0007669"/>
    <property type="project" value="InterPro"/>
</dbReference>
<dbReference type="GO" id="GO:0006412">
    <property type="term" value="P:translation"/>
    <property type="evidence" value="ECO:0007669"/>
    <property type="project" value="UniProtKB-UniRule"/>
</dbReference>
<dbReference type="CDD" id="cd00349">
    <property type="entry name" value="Ribosomal_L11"/>
    <property type="match status" value="1"/>
</dbReference>
<dbReference type="FunFam" id="1.10.10.250:FF:000001">
    <property type="entry name" value="50S ribosomal protein L11"/>
    <property type="match status" value="1"/>
</dbReference>
<dbReference type="FunFam" id="3.30.1550.10:FF:000001">
    <property type="entry name" value="50S ribosomal protein L11"/>
    <property type="match status" value="1"/>
</dbReference>
<dbReference type="Gene3D" id="1.10.10.250">
    <property type="entry name" value="Ribosomal protein L11, C-terminal domain"/>
    <property type="match status" value="1"/>
</dbReference>
<dbReference type="Gene3D" id="3.30.1550.10">
    <property type="entry name" value="Ribosomal protein L11/L12, N-terminal domain"/>
    <property type="match status" value="1"/>
</dbReference>
<dbReference type="HAMAP" id="MF_00736">
    <property type="entry name" value="Ribosomal_uL11"/>
    <property type="match status" value="1"/>
</dbReference>
<dbReference type="InterPro" id="IPR000911">
    <property type="entry name" value="Ribosomal_uL11"/>
</dbReference>
<dbReference type="InterPro" id="IPR006519">
    <property type="entry name" value="Ribosomal_uL11_bac-typ"/>
</dbReference>
<dbReference type="InterPro" id="IPR020783">
    <property type="entry name" value="Ribosomal_uL11_C"/>
</dbReference>
<dbReference type="InterPro" id="IPR036769">
    <property type="entry name" value="Ribosomal_uL11_C_sf"/>
</dbReference>
<dbReference type="InterPro" id="IPR020785">
    <property type="entry name" value="Ribosomal_uL11_CS"/>
</dbReference>
<dbReference type="InterPro" id="IPR020784">
    <property type="entry name" value="Ribosomal_uL11_N"/>
</dbReference>
<dbReference type="InterPro" id="IPR036796">
    <property type="entry name" value="Ribosomal_uL11_N_sf"/>
</dbReference>
<dbReference type="NCBIfam" id="TIGR01632">
    <property type="entry name" value="L11_bact"/>
    <property type="match status" value="1"/>
</dbReference>
<dbReference type="PANTHER" id="PTHR11661">
    <property type="entry name" value="60S RIBOSOMAL PROTEIN L12"/>
    <property type="match status" value="1"/>
</dbReference>
<dbReference type="PANTHER" id="PTHR11661:SF1">
    <property type="entry name" value="LARGE RIBOSOMAL SUBUNIT PROTEIN UL11M"/>
    <property type="match status" value="1"/>
</dbReference>
<dbReference type="Pfam" id="PF00298">
    <property type="entry name" value="Ribosomal_L11"/>
    <property type="match status" value="1"/>
</dbReference>
<dbReference type="Pfam" id="PF03946">
    <property type="entry name" value="Ribosomal_L11_N"/>
    <property type="match status" value="1"/>
</dbReference>
<dbReference type="SMART" id="SM00649">
    <property type="entry name" value="RL11"/>
    <property type="match status" value="1"/>
</dbReference>
<dbReference type="SUPFAM" id="SSF54747">
    <property type="entry name" value="Ribosomal L11/L12e N-terminal domain"/>
    <property type="match status" value="1"/>
</dbReference>
<dbReference type="SUPFAM" id="SSF46906">
    <property type="entry name" value="Ribosomal protein L11, C-terminal domain"/>
    <property type="match status" value="1"/>
</dbReference>
<dbReference type="PROSITE" id="PS00359">
    <property type="entry name" value="RIBOSOMAL_L11"/>
    <property type="match status" value="1"/>
</dbReference>
<keyword id="KW-0150">Chloroplast</keyword>
<keyword id="KW-0934">Plastid</keyword>
<keyword id="KW-0687">Ribonucleoprotein</keyword>
<keyword id="KW-0689">Ribosomal protein</keyword>
<keyword id="KW-0694">RNA-binding</keyword>
<keyword id="KW-0699">rRNA-binding</keyword>
<comment type="function">
    <text evidence="1">Forms part of the ribosomal stalk which helps the ribosome interact with GTP-bound translation factors.</text>
</comment>
<comment type="subunit">
    <text evidence="1">Part of the ribosomal stalk of the 50S ribosomal subunit. Interacts with L10 and the large rRNA to form the base of the stalk. L10 forms an elongated spine to which L12 dimers bind in a sequential fashion forming a multimeric L10(L12)X complex.</text>
</comment>
<comment type="subcellular location">
    <subcellularLocation>
        <location>Plastid</location>
        <location>Chloroplast</location>
    </subcellularLocation>
</comment>
<comment type="similarity">
    <text evidence="1">Belongs to the universal ribosomal protein uL11 family.</text>
</comment>
<geneLocation type="chloroplast"/>
<gene>
    <name evidence="1" type="primary">rpl11</name>
</gene>
<sequence>MAKKVTGIVKLALNAGKATPAPPVGPALGQHGVNIVMFCKEYNARTADKSGLVIPVEISIYEDRSFTFILKTPPASVLIAKAAGLNKGSGEPNTKKVGSITNKQLESIAETKLPDLNTNNIPQAMKIVGGTAKNMGILIKD</sequence>